<organism>
    <name type="scientific">Drosophila melanogaster</name>
    <name type="common">Fruit fly</name>
    <dbReference type="NCBI Taxonomy" id="7227"/>
    <lineage>
        <taxon>Eukaryota</taxon>
        <taxon>Metazoa</taxon>
        <taxon>Ecdysozoa</taxon>
        <taxon>Arthropoda</taxon>
        <taxon>Hexapoda</taxon>
        <taxon>Insecta</taxon>
        <taxon>Pterygota</taxon>
        <taxon>Neoptera</taxon>
        <taxon>Endopterygota</taxon>
        <taxon>Diptera</taxon>
        <taxon>Brachycera</taxon>
        <taxon>Muscomorpha</taxon>
        <taxon>Ephydroidea</taxon>
        <taxon>Drosophilidae</taxon>
        <taxon>Drosophila</taxon>
        <taxon>Sophophora</taxon>
    </lineage>
</organism>
<dbReference type="EC" id="2.4.1.117" evidence="1"/>
<dbReference type="EMBL" id="AE014134">
    <property type="protein sequence ID" value="AAF52633.1"/>
    <property type="molecule type" value="Genomic_DNA"/>
</dbReference>
<dbReference type="EMBL" id="AY094692">
    <property type="protein sequence ID" value="AAM11045.1"/>
    <property type="molecule type" value="mRNA"/>
</dbReference>
<dbReference type="RefSeq" id="NP_609202.1">
    <property type="nucleotide sequence ID" value="NM_135358.2"/>
</dbReference>
<dbReference type="SMR" id="Q9VLQ1"/>
<dbReference type="FunCoup" id="Q9VLQ1">
    <property type="interactions" value="1940"/>
</dbReference>
<dbReference type="STRING" id="7227.FBpp0079234"/>
<dbReference type="CAZy" id="GT2">
    <property type="family name" value="Glycosyltransferase Family 2"/>
</dbReference>
<dbReference type="PaxDb" id="7227-FBpp0079234"/>
<dbReference type="DNASU" id="34134"/>
<dbReference type="EnsemblMetazoa" id="FBtr0079614">
    <property type="protein sequence ID" value="FBpp0079234"/>
    <property type="gene ID" value="FBgn0261020"/>
</dbReference>
<dbReference type="GeneID" id="34134"/>
<dbReference type="KEGG" id="dme:Dmel_CG7870"/>
<dbReference type="UCSC" id="CG7870-RA">
    <property type="organism name" value="d. melanogaster"/>
</dbReference>
<dbReference type="AGR" id="FB:FBgn0261020"/>
<dbReference type="CTD" id="34134"/>
<dbReference type="FlyBase" id="FBgn0261020">
    <property type="gene designation" value="wol"/>
</dbReference>
<dbReference type="VEuPathDB" id="VectorBase:FBgn0261020"/>
<dbReference type="eggNOG" id="KOG2977">
    <property type="taxonomic scope" value="Eukaryota"/>
</dbReference>
<dbReference type="GeneTree" id="ENSGT00940000153481"/>
<dbReference type="HOGENOM" id="CLU_033536_9_1_1"/>
<dbReference type="InParanoid" id="Q9VLQ1"/>
<dbReference type="OMA" id="HMVNTDA"/>
<dbReference type="OrthoDB" id="3784at2759"/>
<dbReference type="PhylomeDB" id="Q9VLQ1"/>
<dbReference type="Reactome" id="R-DME-480985">
    <property type="pathway name" value="Synthesis of dolichyl-phosphate-glucose"/>
</dbReference>
<dbReference type="UniPathway" id="UPA00378"/>
<dbReference type="BioGRID-ORCS" id="34134">
    <property type="hits" value="0 hits in 1 CRISPR screen"/>
</dbReference>
<dbReference type="GenomeRNAi" id="34134"/>
<dbReference type="PRO" id="PR:Q9VLQ1"/>
<dbReference type="Proteomes" id="UP000000803">
    <property type="component" value="Chromosome 2L"/>
</dbReference>
<dbReference type="Bgee" id="FBgn0261020">
    <property type="expression patterns" value="Expressed in saliva-secreting gland and 113 other cell types or tissues"/>
</dbReference>
<dbReference type="GO" id="GO:0005783">
    <property type="term" value="C:endoplasmic reticulum"/>
    <property type="evidence" value="ECO:0000314"/>
    <property type="project" value="FlyBase"/>
</dbReference>
<dbReference type="GO" id="GO:0005789">
    <property type="term" value="C:endoplasmic reticulum membrane"/>
    <property type="evidence" value="ECO:0000318"/>
    <property type="project" value="GO_Central"/>
</dbReference>
<dbReference type="GO" id="GO:0004581">
    <property type="term" value="F:dolichyl-phosphate beta-glucosyltransferase activity"/>
    <property type="evidence" value="ECO:0000315"/>
    <property type="project" value="FlyBase"/>
</dbReference>
<dbReference type="GO" id="GO:0040003">
    <property type="term" value="P:chitin-based cuticle development"/>
    <property type="evidence" value="ECO:0000315"/>
    <property type="project" value="FlyBase"/>
</dbReference>
<dbReference type="GO" id="GO:0009953">
    <property type="term" value="P:dorsal/ventral pattern formation"/>
    <property type="evidence" value="ECO:0000315"/>
    <property type="project" value="UniProtKB"/>
</dbReference>
<dbReference type="GO" id="GO:0007029">
    <property type="term" value="P:endoplasmic reticulum organization"/>
    <property type="evidence" value="ECO:0000315"/>
    <property type="project" value="FlyBase"/>
</dbReference>
<dbReference type="GO" id="GO:0010004">
    <property type="term" value="P:gastrulation involving germ band extension"/>
    <property type="evidence" value="ECO:0000315"/>
    <property type="project" value="UniProtKB"/>
</dbReference>
<dbReference type="GO" id="GO:0007509">
    <property type="term" value="P:mesoderm migration involved in gastrulation"/>
    <property type="evidence" value="ECO:0000315"/>
    <property type="project" value="UniProtKB"/>
</dbReference>
<dbReference type="GO" id="GO:0007009">
    <property type="term" value="P:plasma membrane organization"/>
    <property type="evidence" value="ECO:0000315"/>
    <property type="project" value="FlyBase"/>
</dbReference>
<dbReference type="GO" id="GO:0006487">
    <property type="term" value="P:protein N-linked glycosylation"/>
    <property type="evidence" value="ECO:0000315"/>
    <property type="project" value="FlyBase"/>
</dbReference>
<dbReference type="GO" id="GO:0006493">
    <property type="term" value="P:protein O-linked glycosylation"/>
    <property type="evidence" value="ECO:0000315"/>
    <property type="project" value="FlyBase"/>
</dbReference>
<dbReference type="GO" id="GO:0007379">
    <property type="term" value="P:segment specification"/>
    <property type="evidence" value="ECO:0007001"/>
    <property type="project" value="FlyBase"/>
</dbReference>
<dbReference type="GO" id="GO:0019991">
    <property type="term" value="P:septate junction assembly"/>
    <property type="evidence" value="ECO:0000315"/>
    <property type="project" value="FlyBase"/>
</dbReference>
<dbReference type="CDD" id="cd04188">
    <property type="entry name" value="DPG_synthase"/>
    <property type="match status" value="1"/>
</dbReference>
<dbReference type="FunFam" id="3.90.550.10:FF:000068">
    <property type="entry name" value="ALG5, dolichyl-phosphate beta-glucosyltransferase"/>
    <property type="match status" value="1"/>
</dbReference>
<dbReference type="Gene3D" id="3.90.550.10">
    <property type="entry name" value="Spore Coat Polysaccharide Biosynthesis Protein SpsA, Chain A"/>
    <property type="match status" value="1"/>
</dbReference>
<dbReference type="InterPro" id="IPR035518">
    <property type="entry name" value="DPG_synthase"/>
</dbReference>
<dbReference type="InterPro" id="IPR001173">
    <property type="entry name" value="Glyco_trans_2-like"/>
</dbReference>
<dbReference type="InterPro" id="IPR029044">
    <property type="entry name" value="Nucleotide-diphossugar_trans"/>
</dbReference>
<dbReference type="PANTHER" id="PTHR10859:SF91">
    <property type="entry name" value="DOLICHYL-PHOSPHATE BETA-GLUCOSYLTRANSFERASE"/>
    <property type="match status" value="1"/>
</dbReference>
<dbReference type="PANTHER" id="PTHR10859">
    <property type="entry name" value="GLYCOSYL TRANSFERASE"/>
    <property type="match status" value="1"/>
</dbReference>
<dbReference type="Pfam" id="PF00535">
    <property type="entry name" value="Glycos_transf_2"/>
    <property type="match status" value="1"/>
</dbReference>
<dbReference type="SUPFAM" id="SSF53448">
    <property type="entry name" value="Nucleotide-diphospho-sugar transferases"/>
    <property type="match status" value="1"/>
</dbReference>
<comment type="function">
    <text evidence="4 5">Required for normal production of N-glycosylated proteins in the endoplasmic reticulum (ER). Required for embryonic segmentation, dorsal-ventral patterning and gastrulation. Required for chitin orientation and shaping of the apical and lateral plasma membranes of epidermal cells during cuticle differentiation. Also required for correctly shaping apical membrane topology of the epithelia of other organs such as the midgut and the hindgut.</text>
</comment>
<comment type="catalytic activity">
    <reaction evidence="1">
        <text>a di-trans,poly-cis-dolichyl phosphate + UDP-alpha-D-glucose = a di-trans,poly-cis-dolichyl beta-D-glucosyl phosphate + UDP</text>
        <dbReference type="Rhea" id="RHEA:15401"/>
        <dbReference type="Rhea" id="RHEA-COMP:19498"/>
        <dbReference type="Rhea" id="RHEA-COMP:19502"/>
        <dbReference type="ChEBI" id="CHEBI:57525"/>
        <dbReference type="ChEBI" id="CHEBI:57683"/>
        <dbReference type="ChEBI" id="CHEBI:58223"/>
        <dbReference type="ChEBI" id="CHEBI:58885"/>
        <dbReference type="EC" id="2.4.1.117"/>
    </reaction>
    <physiologicalReaction direction="left-to-right" evidence="1">
        <dbReference type="Rhea" id="RHEA:15402"/>
    </physiologicalReaction>
</comment>
<comment type="pathway">
    <text evidence="1">Protein modification; protein glycosylation.</text>
</comment>
<comment type="subcellular location">
    <subcellularLocation>
        <location evidence="5">Endoplasmic reticulum membrane</location>
        <topology evidence="2">Single-pass membrane protein</topology>
    </subcellularLocation>
</comment>
<comment type="developmental stage">
    <text evidence="4">Expressed maternally and zygotically. In cellularizing embryos, maternal expression is ubiquitous. At embryonic stage 11, zygotic expression begins in salivary gland precursor cells. In stage 16 embryos, strong expression in salivary glands and part of the proventriculus is detected.</text>
</comment>
<comment type="disruption phenotype">
    <text evidence="4 5">Larval lethality. Embryos lacking maternal and zygotic wol activity show segmentation, dorso-ventral patterning and gastrulation defects. As a result, germband elongation does not proceed normally and mesoderm invagination is disturbed. In these embryos, protein glycosylation is reduced by 25 percent, the ER tubules are smooth and the unfolded protein response (UPR), a transcriptional response which up-regulates genes that enable cells to cope with misfolded, endoplasmic reticulum-retained proteins, is activated. Larvae lacking maternal wol present patterning and morphological defects, including the failure to form a normal head skeleton, a discontinuous cuticle and irregular body contours. Larvae lacking both maternal and zygotic wol show severe reduction in cuticle deposition, a complete failure of denticle formation and melanization, loss of chitin orientation in the procuticle and dislocation of proteins of the lower electron-dense portion of the epicuticle into the upper electron-lucid sublayer. In addition, the midgut microvilli are separated from each other by large gaps and the apical plasma membrane of the hindgut is highly irregular.</text>
</comment>
<comment type="miscellaneous">
    <text evidence="6">'Wollknaeuel' means 'ball of wool' in German.</text>
</comment>
<comment type="similarity">
    <text evidence="1">Belongs to the glycosyltransferase 2 family.</text>
</comment>
<keyword id="KW-0256">Endoplasmic reticulum</keyword>
<keyword id="KW-0328">Glycosyltransferase</keyword>
<keyword id="KW-0472">Membrane</keyword>
<keyword id="KW-1185">Reference proteome</keyword>
<keyword id="KW-0735">Signal-anchor</keyword>
<keyword id="KW-0808">Transferase</keyword>
<keyword id="KW-0812">Transmembrane</keyword>
<keyword id="KW-1133">Transmembrane helix</keyword>
<reference evidence="9" key="1">
    <citation type="journal article" date="2000" name="Science">
        <title>The genome sequence of Drosophila melanogaster.</title>
        <authorList>
            <person name="Adams M.D."/>
            <person name="Celniker S.E."/>
            <person name="Holt R.A."/>
            <person name="Evans C.A."/>
            <person name="Gocayne J.D."/>
            <person name="Amanatides P.G."/>
            <person name="Scherer S.E."/>
            <person name="Li P.W."/>
            <person name="Hoskins R.A."/>
            <person name="Galle R.F."/>
            <person name="George R.A."/>
            <person name="Lewis S.E."/>
            <person name="Richards S."/>
            <person name="Ashburner M."/>
            <person name="Henderson S.N."/>
            <person name="Sutton G.G."/>
            <person name="Wortman J.R."/>
            <person name="Yandell M.D."/>
            <person name="Zhang Q."/>
            <person name="Chen L.X."/>
            <person name="Brandon R.C."/>
            <person name="Rogers Y.-H.C."/>
            <person name="Blazej R.G."/>
            <person name="Champe M."/>
            <person name="Pfeiffer B.D."/>
            <person name="Wan K.H."/>
            <person name="Doyle C."/>
            <person name="Baxter E.G."/>
            <person name="Helt G."/>
            <person name="Nelson C.R."/>
            <person name="Miklos G.L.G."/>
            <person name="Abril J.F."/>
            <person name="Agbayani A."/>
            <person name="An H.-J."/>
            <person name="Andrews-Pfannkoch C."/>
            <person name="Baldwin D."/>
            <person name="Ballew R.M."/>
            <person name="Basu A."/>
            <person name="Baxendale J."/>
            <person name="Bayraktaroglu L."/>
            <person name="Beasley E.M."/>
            <person name="Beeson K.Y."/>
            <person name="Benos P.V."/>
            <person name="Berman B.P."/>
            <person name="Bhandari D."/>
            <person name="Bolshakov S."/>
            <person name="Borkova D."/>
            <person name="Botchan M.R."/>
            <person name="Bouck J."/>
            <person name="Brokstein P."/>
            <person name="Brottier P."/>
            <person name="Burtis K.C."/>
            <person name="Busam D.A."/>
            <person name="Butler H."/>
            <person name="Cadieu E."/>
            <person name="Center A."/>
            <person name="Chandra I."/>
            <person name="Cherry J.M."/>
            <person name="Cawley S."/>
            <person name="Dahlke C."/>
            <person name="Davenport L.B."/>
            <person name="Davies P."/>
            <person name="de Pablos B."/>
            <person name="Delcher A."/>
            <person name="Deng Z."/>
            <person name="Mays A.D."/>
            <person name="Dew I."/>
            <person name="Dietz S.M."/>
            <person name="Dodson K."/>
            <person name="Doup L.E."/>
            <person name="Downes M."/>
            <person name="Dugan-Rocha S."/>
            <person name="Dunkov B.C."/>
            <person name="Dunn P."/>
            <person name="Durbin K.J."/>
            <person name="Evangelista C.C."/>
            <person name="Ferraz C."/>
            <person name="Ferriera S."/>
            <person name="Fleischmann W."/>
            <person name="Fosler C."/>
            <person name="Gabrielian A.E."/>
            <person name="Garg N.S."/>
            <person name="Gelbart W.M."/>
            <person name="Glasser K."/>
            <person name="Glodek A."/>
            <person name="Gong F."/>
            <person name="Gorrell J.H."/>
            <person name="Gu Z."/>
            <person name="Guan P."/>
            <person name="Harris M."/>
            <person name="Harris N.L."/>
            <person name="Harvey D.A."/>
            <person name="Heiman T.J."/>
            <person name="Hernandez J.R."/>
            <person name="Houck J."/>
            <person name="Hostin D."/>
            <person name="Houston K.A."/>
            <person name="Howland T.J."/>
            <person name="Wei M.-H."/>
            <person name="Ibegwam C."/>
            <person name="Jalali M."/>
            <person name="Kalush F."/>
            <person name="Karpen G.H."/>
            <person name="Ke Z."/>
            <person name="Kennison J.A."/>
            <person name="Ketchum K.A."/>
            <person name="Kimmel B.E."/>
            <person name="Kodira C.D."/>
            <person name="Kraft C.L."/>
            <person name="Kravitz S."/>
            <person name="Kulp D."/>
            <person name="Lai Z."/>
            <person name="Lasko P."/>
            <person name="Lei Y."/>
            <person name="Levitsky A.A."/>
            <person name="Li J.H."/>
            <person name="Li Z."/>
            <person name="Liang Y."/>
            <person name="Lin X."/>
            <person name="Liu X."/>
            <person name="Mattei B."/>
            <person name="McIntosh T.C."/>
            <person name="McLeod M.P."/>
            <person name="McPherson D."/>
            <person name="Merkulov G."/>
            <person name="Milshina N.V."/>
            <person name="Mobarry C."/>
            <person name="Morris J."/>
            <person name="Moshrefi A."/>
            <person name="Mount S.M."/>
            <person name="Moy M."/>
            <person name="Murphy B."/>
            <person name="Murphy L."/>
            <person name="Muzny D.M."/>
            <person name="Nelson D.L."/>
            <person name="Nelson D.R."/>
            <person name="Nelson K.A."/>
            <person name="Nixon K."/>
            <person name="Nusskern D.R."/>
            <person name="Pacleb J.M."/>
            <person name="Palazzolo M."/>
            <person name="Pittman G.S."/>
            <person name="Pan S."/>
            <person name="Pollard J."/>
            <person name="Puri V."/>
            <person name="Reese M.G."/>
            <person name="Reinert K."/>
            <person name="Remington K."/>
            <person name="Saunders R.D.C."/>
            <person name="Scheeler F."/>
            <person name="Shen H."/>
            <person name="Shue B.C."/>
            <person name="Siden-Kiamos I."/>
            <person name="Simpson M."/>
            <person name="Skupski M.P."/>
            <person name="Smith T.J."/>
            <person name="Spier E."/>
            <person name="Spradling A.C."/>
            <person name="Stapleton M."/>
            <person name="Strong R."/>
            <person name="Sun E."/>
            <person name="Svirskas R."/>
            <person name="Tector C."/>
            <person name="Turner R."/>
            <person name="Venter E."/>
            <person name="Wang A.H."/>
            <person name="Wang X."/>
            <person name="Wang Z.-Y."/>
            <person name="Wassarman D.A."/>
            <person name="Weinstock G.M."/>
            <person name="Weissenbach J."/>
            <person name="Williams S.M."/>
            <person name="Woodage T."/>
            <person name="Worley K.C."/>
            <person name="Wu D."/>
            <person name="Yang S."/>
            <person name="Yao Q.A."/>
            <person name="Ye J."/>
            <person name="Yeh R.-F."/>
            <person name="Zaveri J.S."/>
            <person name="Zhan M."/>
            <person name="Zhang G."/>
            <person name="Zhao Q."/>
            <person name="Zheng L."/>
            <person name="Zheng X.H."/>
            <person name="Zhong F.N."/>
            <person name="Zhong W."/>
            <person name="Zhou X."/>
            <person name="Zhu S.C."/>
            <person name="Zhu X."/>
            <person name="Smith H.O."/>
            <person name="Gibbs R.A."/>
            <person name="Myers E.W."/>
            <person name="Rubin G.M."/>
            <person name="Venter J.C."/>
        </authorList>
    </citation>
    <scope>NUCLEOTIDE SEQUENCE [LARGE SCALE GENOMIC DNA]</scope>
    <source>
        <strain>Berkeley</strain>
    </source>
</reference>
<reference evidence="9" key="2">
    <citation type="journal article" date="2002" name="Genome Biol.">
        <title>Annotation of the Drosophila melanogaster euchromatic genome: a systematic review.</title>
        <authorList>
            <person name="Misra S."/>
            <person name="Crosby M.A."/>
            <person name="Mungall C.J."/>
            <person name="Matthews B.B."/>
            <person name="Campbell K.S."/>
            <person name="Hradecky P."/>
            <person name="Huang Y."/>
            <person name="Kaminker J.S."/>
            <person name="Millburn G.H."/>
            <person name="Prochnik S.E."/>
            <person name="Smith C.D."/>
            <person name="Tupy J.L."/>
            <person name="Whitfield E.J."/>
            <person name="Bayraktaroglu L."/>
            <person name="Berman B.P."/>
            <person name="Bettencourt B.R."/>
            <person name="Celniker S.E."/>
            <person name="de Grey A.D.N.J."/>
            <person name="Drysdale R.A."/>
            <person name="Harris N.L."/>
            <person name="Richter J."/>
            <person name="Russo S."/>
            <person name="Schroeder A.J."/>
            <person name="Shu S.Q."/>
            <person name="Stapleton M."/>
            <person name="Yamada C."/>
            <person name="Ashburner M."/>
            <person name="Gelbart W.M."/>
            <person name="Rubin G.M."/>
            <person name="Lewis S.E."/>
        </authorList>
    </citation>
    <scope>GENOME REANNOTATION</scope>
    <source>
        <strain>Berkeley</strain>
    </source>
</reference>
<reference evidence="10" key="3">
    <citation type="journal article" date="2002" name="Genome Biol.">
        <title>A Drosophila full-length cDNA resource.</title>
        <authorList>
            <person name="Stapleton M."/>
            <person name="Carlson J.W."/>
            <person name="Brokstein P."/>
            <person name="Yu C."/>
            <person name="Champe M."/>
            <person name="George R.A."/>
            <person name="Guarin H."/>
            <person name="Kronmiller B."/>
            <person name="Pacleb J.M."/>
            <person name="Park S."/>
            <person name="Wan K.H."/>
            <person name="Rubin G.M."/>
            <person name="Celniker S.E."/>
        </authorList>
    </citation>
    <scope>NUCLEOTIDE SEQUENCE [LARGE SCALE MRNA]</scope>
    <source>
        <strain evidence="3">Berkeley</strain>
        <tissue evidence="3">Head</tissue>
    </source>
</reference>
<reference evidence="8" key="4">
    <citation type="journal article" date="2008" name="Development">
        <title>Wollknauel is required for embryo patterning and encodes the Drosophila ALG5 UDP-glucose:dolichyl-phosphate glucosyltransferase.</title>
        <authorList>
            <person name="Haecker A."/>
            <person name="Bergman M."/>
            <person name="Neupert C."/>
            <person name="Moussian B."/>
            <person name="Luschnig S."/>
            <person name="Aebi M."/>
            <person name="Mannervik M."/>
        </authorList>
    </citation>
    <scope>FUNCTION</scope>
    <scope>DEVELOPMENTAL STAGE</scope>
    <scope>DISRUPTION PHENOTYPE</scope>
    <scope>MUTAGENESIS OF ARG-209</scope>
</reference>
<reference evidence="8" key="5">
    <citation type="journal article" date="2011" name="Glycobiology">
        <title>The Alg5 ortholog Wollknauel is essential for correct epidermal differentiation during Drosophila late embryogenesis.</title>
        <authorList>
            <person name="Shaik K.S."/>
            <person name="Pabst M."/>
            <person name="Schwarz H."/>
            <person name="Altmann F."/>
            <person name="Moussian B."/>
        </authorList>
    </citation>
    <scope>FUNCTION</scope>
    <scope>SUBCELLULAR LOCATION</scope>
    <scope>DISRUPTION PHENOTYPE</scope>
</reference>
<name>ALG5_DROME</name>
<protein>
    <recommendedName>
        <fullName evidence="1">Dolichyl-phosphate beta-glucosyltransferase</fullName>
        <ecNumber evidence="1">2.4.1.117</ecNumber>
    </recommendedName>
    <alternativeName>
        <fullName evidence="9">Wollknaeuel</fullName>
    </alternativeName>
</protein>
<gene>
    <name type="primary">wol</name>
    <name evidence="7" type="synonym">alg5</name>
    <name type="ORF">CG7870</name>
</gene>
<sequence length="326" mass="37081">MWTCLCQLCFYLLSTLAVAALSIAALVLYKTKPYPNIKRHKDEETFLDPHTIKTVTFPSLEDSPSLELSVIVPAYNEEQRLPSMLDECLAFLEQKSAGTPNFTYEVIVVSDGSQDATVSVALGYSKKHGAEKVRVLELIENRGKGGAVRMGMLSARGRNLLFADADGATKFPDYDKLEVALKQLAPEWRDDGIAIGSRAHLENDAIATRSFFRTILMHGFHFLVWLFAVRSIRDTQCGFKLFTRTTARKLFTSLHVERWAFDVELLYLAENLKLPMSEVAVRWTEIDGSKLTPFWSWLQMGRDLFMIWVRYLVGAWRIASIQKKEK</sequence>
<feature type="chain" id="PRO_0000423515" description="Dolichyl-phosphate beta-glucosyltransferase">
    <location>
        <begin position="1"/>
        <end position="326"/>
    </location>
</feature>
<feature type="topological domain" description="Lumenal" evidence="2">
    <location>
        <begin position="1"/>
        <end position="7"/>
    </location>
</feature>
<feature type="transmembrane region" description="Helical" evidence="2">
    <location>
        <begin position="8"/>
        <end position="28"/>
    </location>
</feature>
<feature type="topological domain" description="Cytoplasmic" evidence="2">
    <location>
        <begin position="29"/>
        <end position="326"/>
    </location>
</feature>
<feature type="mutagenesis site" description="Fails to rescue glycosylation and growth phenotypes in yeast." evidence="4">
    <original>R</original>
    <variation>W</variation>
    <location>
        <position position="209"/>
    </location>
</feature>
<accession>Q9VLQ1</accession>
<proteinExistence type="evidence at protein level"/>
<evidence type="ECO:0000250" key="1">
    <source>
        <dbReference type="UniProtKB" id="Q9Y673"/>
    </source>
</evidence>
<evidence type="ECO:0000255" key="2"/>
<evidence type="ECO:0000269" key="3">
    <source>
    </source>
</evidence>
<evidence type="ECO:0000269" key="4">
    <source>
    </source>
</evidence>
<evidence type="ECO:0000269" key="5">
    <source>
    </source>
</evidence>
<evidence type="ECO:0000303" key="6">
    <source>
    </source>
</evidence>
<evidence type="ECO:0000303" key="7">
    <source>
    </source>
</evidence>
<evidence type="ECO:0000305" key="8"/>
<evidence type="ECO:0000312" key="9">
    <source>
        <dbReference type="EMBL" id="AAF52633.1"/>
    </source>
</evidence>
<evidence type="ECO:0000312" key="10">
    <source>
        <dbReference type="EMBL" id="AAM11045.1"/>
    </source>
</evidence>